<organism>
    <name type="scientific">Bartonella bacilliformis (strain ATCC 35685 / KC583 / Herrer 020/F12,63)</name>
    <dbReference type="NCBI Taxonomy" id="360095"/>
    <lineage>
        <taxon>Bacteria</taxon>
        <taxon>Pseudomonadati</taxon>
        <taxon>Pseudomonadota</taxon>
        <taxon>Alphaproteobacteria</taxon>
        <taxon>Hyphomicrobiales</taxon>
        <taxon>Bartonellaceae</taxon>
        <taxon>Bartonella</taxon>
    </lineage>
</organism>
<sequence length="390" mass="42852">MPVLTDPVQLLQALIRCPSITPNEAGALSILEQFLRKMGFSVERPIFSDKNTADVENLYAKMGNKGPHLMFAGHSDVVPPGELDNWMYPPFEGIINQGKIYGRGAVDMKGAIACFIAALARVLEKQPIKGAVSLLITGDEEGPAINGTVKLLKWAAQKGEKWNAAIVGEPTSVKRVGDMIKIGRRGSISGIITVKGRQGHVAFPERAANPLPLAHKLIQALTDTALDQGTKNFQASNLELTTIDTGNSATNIIPAQTVIRFNIRYNDLWTKEALIAEIEKRLALVHSENNSNQYPYYQLEWIQNLGSVFLIKNDHLIEILSNAIEIVTGKRPECSTSGGTSDARFIKDYCPVVEFGLPGNTMHMVDECVTLDAMESLTVIYERFIIDFFA</sequence>
<keyword id="KW-0028">Amino-acid biosynthesis</keyword>
<keyword id="KW-0170">Cobalt</keyword>
<keyword id="KW-0220">Diaminopimelate biosynthesis</keyword>
<keyword id="KW-0378">Hydrolase</keyword>
<keyword id="KW-0457">Lysine biosynthesis</keyword>
<keyword id="KW-0479">Metal-binding</keyword>
<keyword id="KW-0862">Zinc</keyword>
<protein>
    <recommendedName>
        <fullName evidence="1">Succinyl-diaminopimelate desuccinylase</fullName>
        <shortName evidence="1">SDAP desuccinylase</shortName>
        <ecNumber evidence="1">3.5.1.18</ecNumber>
    </recommendedName>
    <alternativeName>
        <fullName evidence="1">N-succinyl-LL-2,6-diaminoheptanedioate amidohydrolase</fullName>
    </alternativeName>
</protein>
<accession>A1UUD2</accession>
<evidence type="ECO:0000255" key="1">
    <source>
        <dbReference type="HAMAP-Rule" id="MF_01690"/>
    </source>
</evidence>
<gene>
    <name evidence="1" type="primary">dapE</name>
    <name type="ordered locus">BARBAKC583_1338</name>
</gene>
<comment type="function">
    <text evidence="1">Catalyzes the hydrolysis of N-succinyl-L,L-diaminopimelic acid (SDAP), forming succinate and LL-2,6-diaminopimelate (DAP), an intermediate involved in the bacterial biosynthesis of lysine and meso-diaminopimelic acid, an essential component of bacterial cell walls.</text>
</comment>
<comment type="catalytic activity">
    <reaction evidence="1">
        <text>N-succinyl-(2S,6S)-2,6-diaminopimelate + H2O = (2S,6S)-2,6-diaminopimelate + succinate</text>
        <dbReference type="Rhea" id="RHEA:22608"/>
        <dbReference type="ChEBI" id="CHEBI:15377"/>
        <dbReference type="ChEBI" id="CHEBI:30031"/>
        <dbReference type="ChEBI" id="CHEBI:57609"/>
        <dbReference type="ChEBI" id="CHEBI:58087"/>
        <dbReference type="EC" id="3.5.1.18"/>
    </reaction>
</comment>
<comment type="cofactor">
    <cofactor evidence="1">
        <name>Zn(2+)</name>
        <dbReference type="ChEBI" id="CHEBI:29105"/>
    </cofactor>
    <cofactor evidence="1">
        <name>Co(2+)</name>
        <dbReference type="ChEBI" id="CHEBI:48828"/>
    </cofactor>
    <text evidence="1">Binds 2 Zn(2+) or Co(2+) ions per subunit.</text>
</comment>
<comment type="pathway">
    <text evidence="1">Amino-acid biosynthesis; L-lysine biosynthesis via DAP pathway; LL-2,6-diaminopimelate from (S)-tetrahydrodipicolinate (succinylase route): step 3/3.</text>
</comment>
<comment type="subunit">
    <text evidence="1">Homodimer.</text>
</comment>
<comment type="similarity">
    <text evidence="1">Belongs to the peptidase M20A family. DapE subfamily.</text>
</comment>
<reference key="1">
    <citation type="submission" date="2006-12" db="EMBL/GenBank/DDBJ databases">
        <authorList>
            <person name="Hendrix L."/>
            <person name="Mohamoud Y."/>
            <person name="Radune D."/>
            <person name="Shvartsbeyn A."/>
            <person name="Daugherty S."/>
            <person name="Dodson R."/>
            <person name="Durkin A.S."/>
            <person name="Harkins D."/>
            <person name="Huot H."/>
            <person name="Kothari S.P."/>
            <person name="Madupu R."/>
            <person name="Li J."/>
            <person name="Nelson W.C."/>
            <person name="Shrivastava S."/>
            <person name="Giglio M.G."/>
            <person name="Haft D."/>
            <person name="Selengut J."/>
            <person name="Fraser-Ligget C."/>
            <person name="Seshadri R."/>
        </authorList>
    </citation>
    <scope>NUCLEOTIDE SEQUENCE [LARGE SCALE GENOMIC DNA]</scope>
    <source>
        <strain>ATCC 35685 / KC583 / Herrer 020/F12,63</strain>
    </source>
</reference>
<feature type="chain" id="PRO_0000375469" description="Succinyl-diaminopimelate desuccinylase">
    <location>
        <begin position="1"/>
        <end position="390"/>
    </location>
</feature>
<feature type="active site" evidence="1">
    <location>
        <position position="76"/>
    </location>
</feature>
<feature type="active site" description="Proton acceptor" evidence="1">
    <location>
        <position position="140"/>
    </location>
</feature>
<feature type="binding site" evidence="1">
    <location>
        <position position="74"/>
    </location>
    <ligand>
        <name>Zn(2+)</name>
        <dbReference type="ChEBI" id="CHEBI:29105"/>
        <label>1</label>
    </ligand>
</feature>
<feature type="binding site" evidence="1">
    <location>
        <position position="107"/>
    </location>
    <ligand>
        <name>Zn(2+)</name>
        <dbReference type="ChEBI" id="CHEBI:29105"/>
        <label>1</label>
    </ligand>
</feature>
<feature type="binding site" evidence="1">
    <location>
        <position position="107"/>
    </location>
    <ligand>
        <name>Zn(2+)</name>
        <dbReference type="ChEBI" id="CHEBI:29105"/>
        <label>2</label>
    </ligand>
</feature>
<feature type="binding site" evidence="1">
    <location>
        <position position="141"/>
    </location>
    <ligand>
        <name>Zn(2+)</name>
        <dbReference type="ChEBI" id="CHEBI:29105"/>
        <label>2</label>
    </ligand>
</feature>
<feature type="binding site" evidence="1">
    <location>
        <position position="169"/>
    </location>
    <ligand>
        <name>Zn(2+)</name>
        <dbReference type="ChEBI" id="CHEBI:29105"/>
        <label>1</label>
    </ligand>
</feature>
<feature type="binding site" evidence="1">
    <location>
        <position position="363"/>
    </location>
    <ligand>
        <name>Zn(2+)</name>
        <dbReference type="ChEBI" id="CHEBI:29105"/>
        <label>2</label>
    </ligand>
</feature>
<name>DAPE_BARBK</name>
<proteinExistence type="inferred from homology"/>
<dbReference type="EC" id="3.5.1.18" evidence="1"/>
<dbReference type="EMBL" id="CP000524">
    <property type="protein sequence ID" value="ABM45162.1"/>
    <property type="molecule type" value="Genomic_DNA"/>
</dbReference>
<dbReference type="RefSeq" id="WP_005768126.1">
    <property type="nucleotide sequence ID" value="NC_008783.1"/>
</dbReference>
<dbReference type="SMR" id="A1UUD2"/>
<dbReference type="STRING" id="360095.BARBAKC583_1338"/>
<dbReference type="GeneID" id="4684198"/>
<dbReference type="KEGG" id="bbk:BARBAKC583_1338"/>
<dbReference type="PATRIC" id="fig|360095.6.peg.1311"/>
<dbReference type="eggNOG" id="COG0624">
    <property type="taxonomic scope" value="Bacteria"/>
</dbReference>
<dbReference type="HOGENOM" id="CLU_021802_4_0_5"/>
<dbReference type="OrthoDB" id="9809784at2"/>
<dbReference type="UniPathway" id="UPA00034">
    <property type="reaction ID" value="UER00021"/>
</dbReference>
<dbReference type="Proteomes" id="UP000000643">
    <property type="component" value="Chromosome"/>
</dbReference>
<dbReference type="GO" id="GO:0008777">
    <property type="term" value="F:acetylornithine deacetylase activity"/>
    <property type="evidence" value="ECO:0007669"/>
    <property type="project" value="TreeGrafter"/>
</dbReference>
<dbReference type="GO" id="GO:0050897">
    <property type="term" value="F:cobalt ion binding"/>
    <property type="evidence" value="ECO:0007669"/>
    <property type="project" value="UniProtKB-UniRule"/>
</dbReference>
<dbReference type="GO" id="GO:0009014">
    <property type="term" value="F:succinyl-diaminopimelate desuccinylase activity"/>
    <property type="evidence" value="ECO:0007669"/>
    <property type="project" value="UniProtKB-UniRule"/>
</dbReference>
<dbReference type="GO" id="GO:0008270">
    <property type="term" value="F:zinc ion binding"/>
    <property type="evidence" value="ECO:0007669"/>
    <property type="project" value="UniProtKB-UniRule"/>
</dbReference>
<dbReference type="GO" id="GO:0019877">
    <property type="term" value="P:diaminopimelate biosynthetic process"/>
    <property type="evidence" value="ECO:0007669"/>
    <property type="project" value="UniProtKB-UniRule"/>
</dbReference>
<dbReference type="GO" id="GO:0006526">
    <property type="term" value="P:L-arginine biosynthetic process"/>
    <property type="evidence" value="ECO:0007669"/>
    <property type="project" value="TreeGrafter"/>
</dbReference>
<dbReference type="GO" id="GO:0009089">
    <property type="term" value="P:lysine biosynthetic process via diaminopimelate"/>
    <property type="evidence" value="ECO:0007669"/>
    <property type="project" value="UniProtKB-UniRule"/>
</dbReference>
<dbReference type="CDD" id="cd03891">
    <property type="entry name" value="M20_DapE_proteobac"/>
    <property type="match status" value="1"/>
</dbReference>
<dbReference type="Gene3D" id="3.30.70.360">
    <property type="match status" value="1"/>
</dbReference>
<dbReference type="Gene3D" id="3.40.630.10">
    <property type="entry name" value="Zn peptidases"/>
    <property type="match status" value="2"/>
</dbReference>
<dbReference type="HAMAP" id="MF_01690">
    <property type="entry name" value="DapE"/>
    <property type="match status" value="1"/>
</dbReference>
<dbReference type="InterPro" id="IPR010182">
    <property type="entry name" value="ArgE/DapE"/>
</dbReference>
<dbReference type="InterPro" id="IPR001261">
    <property type="entry name" value="ArgE/DapE_CS"/>
</dbReference>
<dbReference type="InterPro" id="IPR036264">
    <property type="entry name" value="Bact_exopeptidase_dim_dom"/>
</dbReference>
<dbReference type="InterPro" id="IPR005941">
    <property type="entry name" value="DapE_proteobac"/>
</dbReference>
<dbReference type="InterPro" id="IPR002933">
    <property type="entry name" value="Peptidase_M20"/>
</dbReference>
<dbReference type="InterPro" id="IPR011650">
    <property type="entry name" value="Peptidase_M20_dimer"/>
</dbReference>
<dbReference type="InterPro" id="IPR050072">
    <property type="entry name" value="Peptidase_M20A"/>
</dbReference>
<dbReference type="NCBIfam" id="TIGR01910">
    <property type="entry name" value="DapE-ArgE"/>
    <property type="match status" value="1"/>
</dbReference>
<dbReference type="NCBIfam" id="TIGR01246">
    <property type="entry name" value="dapE_proteo"/>
    <property type="match status" value="1"/>
</dbReference>
<dbReference type="NCBIfam" id="NF009557">
    <property type="entry name" value="PRK13009.1"/>
    <property type="match status" value="1"/>
</dbReference>
<dbReference type="PANTHER" id="PTHR43808">
    <property type="entry name" value="ACETYLORNITHINE DEACETYLASE"/>
    <property type="match status" value="1"/>
</dbReference>
<dbReference type="PANTHER" id="PTHR43808:SF31">
    <property type="entry name" value="N-ACETYL-L-CITRULLINE DEACETYLASE"/>
    <property type="match status" value="1"/>
</dbReference>
<dbReference type="Pfam" id="PF07687">
    <property type="entry name" value="M20_dimer"/>
    <property type="match status" value="1"/>
</dbReference>
<dbReference type="Pfam" id="PF01546">
    <property type="entry name" value="Peptidase_M20"/>
    <property type="match status" value="1"/>
</dbReference>
<dbReference type="SUPFAM" id="SSF55031">
    <property type="entry name" value="Bacterial exopeptidase dimerisation domain"/>
    <property type="match status" value="1"/>
</dbReference>
<dbReference type="SUPFAM" id="SSF53187">
    <property type="entry name" value="Zn-dependent exopeptidases"/>
    <property type="match status" value="1"/>
</dbReference>
<dbReference type="PROSITE" id="PS00758">
    <property type="entry name" value="ARGE_DAPE_CPG2_1"/>
    <property type="match status" value="1"/>
</dbReference>
<dbReference type="PROSITE" id="PS00759">
    <property type="entry name" value="ARGE_DAPE_CPG2_2"/>
    <property type="match status" value="1"/>
</dbReference>